<dbReference type="EC" id="3.1.1.29" evidence="1"/>
<dbReference type="EMBL" id="CP001400">
    <property type="protein sequence ID" value="ACP38706.1"/>
    <property type="molecule type" value="Genomic_DNA"/>
</dbReference>
<dbReference type="SMR" id="C3MYS2"/>
<dbReference type="KEGG" id="sia:M1425_1962"/>
<dbReference type="HOGENOM" id="CLU_073661_2_2_2"/>
<dbReference type="Proteomes" id="UP000001350">
    <property type="component" value="Chromosome"/>
</dbReference>
<dbReference type="GO" id="GO:0005829">
    <property type="term" value="C:cytosol"/>
    <property type="evidence" value="ECO:0007669"/>
    <property type="project" value="TreeGrafter"/>
</dbReference>
<dbReference type="GO" id="GO:0004045">
    <property type="term" value="F:peptidyl-tRNA hydrolase activity"/>
    <property type="evidence" value="ECO:0007669"/>
    <property type="project" value="UniProtKB-UniRule"/>
</dbReference>
<dbReference type="GO" id="GO:0006412">
    <property type="term" value="P:translation"/>
    <property type="evidence" value="ECO:0007669"/>
    <property type="project" value="UniProtKB-UniRule"/>
</dbReference>
<dbReference type="CDD" id="cd02430">
    <property type="entry name" value="PTH2"/>
    <property type="match status" value="1"/>
</dbReference>
<dbReference type="FunFam" id="3.40.1490.10:FF:000001">
    <property type="entry name" value="Peptidyl-tRNA hydrolase 2"/>
    <property type="match status" value="1"/>
</dbReference>
<dbReference type="Gene3D" id="3.40.1490.10">
    <property type="entry name" value="Bit1"/>
    <property type="match status" value="1"/>
</dbReference>
<dbReference type="HAMAP" id="MF_00628">
    <property type="entry name" value="Pept_tRNA_hydro_arch"/>
    <property type="match status" value="1"/>
</dbReference>
<dbReference type="InterPro" id="IPR023476">
    <property type="entry name" value="Pep_tRNA_hydro_II_dom_sf"/>
</dbReference>
<dbReference type="InterPro" id="IPR034759">
    <property type="entry name" value="Pept_tRNA_hydro_arch"/>
</dbReference>
<dbReference type="InterPro" id="IPR002833">
    <property type="entry name" value="PTH2"/>
</dbReference>
<dbReference type="NCBIfam" id="TIGR00283">
    <property type="entry name" value="arch_pth2"/>
    <property type="match status" value="1"/>
</dbReference>
<dbReference type="NCBIfam" id="NF003314">
    <property type="entry name" value="PRK04322.1"/>
    <property type="match status" value="1"/>
</dbReference>
<dbReference type="PANTHER" id="PTHR12649">
    <property type="entry name" value="PEPTIDYL-TRNA HYDROLASE 2"/>
    <property type="match status" value="1"/>
</dbReference>
<dbReference type="PANTHER" id="PTHR12649:SF11">
    <property type="entry name" value="PEPTIDYL-TRNA HYDROLASE 2, MITOCHONDRIAL"/>
    <property type="match status" value="1"/>
</dbReference>
<dbReference type="Pfam" id="PF01981">
    <property type="entry name" value="PTH2"/>
    <property type="match status" value="1"/>
</dbReference>
<dbReference type="SUPFAM" id="SSF102462">
    <property type="entry name" value="Peptidyl-tRNA hydrolase II"/>
    <property type="match status" value="1"/>
</dbReference>
<protein>
    <recommendedName>
        <fullName evidence="1">Peptidyl-tRNA hydrolase</fullName>
        <shortName evidence="1">PTH</shortName>
        <ecNumber evidence="1">3.1.1.29</ecNumber>
    </recommendedName>
</protein>
<proteinExistence type="inferred from homology"/>
<name>PTH_SACI4</name>
<organism>
    <name type="scientific">Saccharolobus islandicus (strain M.14.25 / Kamchatka #1)</name>
    <name type="common">Sulfolobus islandicus</name>
    <dbReference type="NCBI Taxonomy" id="427317"/>
    <lineage>
        <taxon>Archaea</taxon>
        <taxon>Thermoproteota</taxon>
        <taxon>Thermoprotei</taxon>
        <taxon>Sulfolobales</taxon>
        <taxon>Sulfolobaceae</taxon>
        <taxon>Saccharolobus</taxon>
    </lineage>
</organism>
<accession>C3MYS2</accession>
<sequence length="120" mass="13147">MVKMVIVVRSDIKMGKGKMAAQVAHAAVTLVISIINSNNSRWKEWLNEWLQQGQPKIVVKANSLDEIILRSKKAETMNLPFSIIEDAGKTQLEPGTITCLGIGPAPENLIDPITGDLKLL</sequence>
<feature type="chain" id="PRO_1000212317" description="Peptidyl-tRNA hydrolase">
    <location>
        <begin position="1"/>
        <end position="120"/>
    </location>
</feature>
<reference key="1">
    <citation type="journal article" date="2009" name="Proc. Natl. Acad. Sci. U.S.A.">
        <title>Biogeography of the Sulfolobus islandicus pan-genome.</title>
        <authorList>
            <person name="Reno M.L."/>
            <person name="Held N.L."/>
            <person name="Fields C.J."/>
            <person name="Burke P.V."/>
            <person name="Whitaker R.J."/>
        </authorList>
    </citation>
    <scope>NUCLEOTIDE SEQUENCE [LARGE SCALE GENOMIC DNA]</scope>
    <source>
        <strain>M.14.25 / Kamchatka #1</strain>
    </source>
</reference>
<gene>
    <name evidence="1" type="primary">pth</name>
    <name type="ordered locus">M1425_1962</name>
</gene>
<keyword id="KW-0963">Cytoplasm</keyword>
<keyword id="KW-0378">Hydrolase</keyword>
<evidence type="ECO:0000255" key="1">
    <source>
        <dbReference type="HAMAP-Rule" id="MF_00628"/>
    </source>
</evidence>
<comment type="function">
    <text evidence="1">The natural substrate for this enzyme may be peptidyl-tRNAs which drop off the ribosome during protein synthesis.</text>
</comment>
<comment type="catalytic activity">
    <reaction evidence="1">
        <text>an N-acyl-L-alpha-aminoacyl-tRNA + H2O = an N-acyl-L-amino acid + a tRNA + H(+)</text>
        <dbReference type="Rhea" id="RHEA:54448"/>
        <dbReference type="Rhea" id="RHEA-COMP:10123"/>
        <dbReference type="Rhea" id="RHEA-COMP:13883"/>
        <dbReference type="ChEBI" id="CHEBI:15377"/>
        <dbReference type="ChEBI" id="CHEBI:15378"/>
        <dbReference type="ChEBI" id="CHEBI:59874"/>
        <dbReference type="ChEBI" id="CHEBI:78442"/>
        <dbReference type="ChEBI" id="CHEBI:138191"/>
        <dbReference type="EC" id="3.1.1.29"/>
    </reaction>
</comment>
<comment type="subcellular location">
    <subcellularLocation>
        <location evidence="1">Cytoplasm</location>
    </subcellularLocation>
</comment>
<comment type="similarity">
    <text evidence="1">Belongs to the PTH2 family.</text>
</comment>